<proteinExistence type="inferred from homology"/>
<sequence>MITDLTFTQLRDKLKNKELSSLQILRAFKDEYEKDLKHPLPLNGFVEFFEDAEEHAKKADELIAQGVSFDEKPLLGLPIAVKDNISMAGKLCTCCSRSLQGYYAPYNATVIDRLLEAGAVLMGRINMDELAMGSSTEFSCYGPSRNPVDRARTPGGSSGGSAAVVAGNQAPFSLGTETGGSVRLPASYCGIYGLKPTYGLFSRYGVVAFSSSLDQVGLFGKEAADIALGLAVMAGKDEKDETSEEADFSSLLKLSAYSKEEIASLKIAIPKEFLNTQGLDQEVKQVFDELCAWLTKNGAKLEEVSIPVLEASIPTYYTLAISEAASNLSRIDGIRFGLRKDTGKGNDELYIQTRSEGFGPEVKRRIITGNYVLSKEFSGDCYEKSLNVRAKIAQGVNEVLQKYDFIICPTAPAPAFKLNEKVDDPIAMYLSDLFTTFVNLARIPSLSVPAGKTKAGLPVGIQFCGKKFSEDRILKLAKAWEEQNA</sequence>
<protein>
    <recommendedName>
        <fullName evidence="1">Glutamyl-tRNA(Gln) amidotransferase subunit A</fullName>
        <shortName evidence="1">Glu-ADT subunit A</shortName>
        <ecNumber evidence="1">6.3.5.7</ecNumber>
    </recommendedName>
</protein>
<reference key="1">
    <citation type="journal article" date="2004" name="Proc. Natl. Acad. Sci. U.S.A.">
        <title>Comparison of the genome of the oral pathogen Treponema denticola with other spirochete genomes.</title>
        <authorList>
            <person name="Seshadri R."/>
            <person name="Myers G.S.A."/>
            <person name="Tettelin H."/>
            <person name="Eisen J.A."/>
            <person name="Heidelberg J.F."/>
            <person name="Dodson R.J."/>
            <person name="Davidsen T.M."/>
            <person name="DeBoy R.T."/>
            <person name="Fouts D.E."/>
            <person name="Haft D.H."/>
            <person name="Selengut J."/>
            <person name="Ren Q."/>
            <person name="Brinkac L.M."/>
            <person name="Madupu R."/>
            <person name="Kolonay J.F."/>
            <person name="Durkin S.A."/>
            <person name="Daugherty S.C."/>
            <person name="Shetty J."/>
            <person name="Shvartsbeyn A."/>
            <person name="Gebregeorgis E."/>
            <person name="Geer K."/>
            <person name="Tsegaye G."/>
            <person name="Malek J.A."/>
            <person name="Ayodeji B."/>
            <person name="Shatsman S."/>
            <person name="McLeod M.P."/>
            <person name="Smajs D."/>
            <person name="Howell J.K."/>
            <person name="Pal S."/>
            <person name="Amin A."/>
            <person name="Vashisth P."/>
            <person name="McNeill T.Z."/>
            <person name="Xiang Q."/>
            <person name="Sodergren E."/>
            <person name="Baca E."/>
            <person name="Weinstock G.M."/>
            <person name="Norris S.J."/>
            <person name="Fraser C.M."/>
            <person name="Paulsen I.T."/>
        </authorList>
    </citation>
    <scope>NUCLEOTIDE SEQUENCE [LARGE SCALE GENOMIC DNA]</scope>
    <source>
        <strain>ATCC 35405 / DSM 14222 / CIP 103919 / JCM 8153 / KCTC 15104</strain>
    </source>
</reference>
<gene>
    <name evidence="1" type="primary">gatA</name>
    <name type="ordered locus">TDE_0576</name>
</gene>
<comment type="function">
    <text evidence="1">Allows the formation of correctly charged Gln-tRNA(Gln) through the transamidation of misacylated Glu-tRNA(Gln) in organisms which lack glutaminyl-tRNA synthetase. The reaction takes place in the presence of glutamine and ATP through an activated gamma-phospho-Glu-tRNA(Gln).</text>
</comment>
<comment type="catalytic activity">
    <reaction evidence="1">
        <text>L-glutamyl-tRNA(Gln) + L-glutamine + ATP + H2O = L-glutaminyl-tRNA(Gln) + L-glutamate + ADP + phosphate + H(+)</text>
        <dbReference type="Rhea" id="RHEA:17521"/>
        <dbReference type="Rhea" id="RHEA-COMP:9681"/>
        <dbReference type="Rhea" id="RHEA-COMP:9684"/>
        <dbReference type="ChEBI" id="CHEBI:15377"/>
        <dbReference type="ChEBI" id="CHEBI:15378"/>
        <dbReference type="ChEBI" id="CHEBI:29985"/>
        <dbReference type="ChEBI" id="CHEBI:30616"/>
        <dbReference type="ChEBI" id="CHEBI:43474"/>
        <dbReference type="ChEBI" id="CHEBI:58359"/>
        <dbReference type="ChEBI" id="CHEBI:78520"/>
        <dbReference type="ChEBI" id="CHEBI:78521"/>
        <dbReference type="ChEBI" id="CHEBI:456216"/>
        <dbReference type="EC" id="6.3.5.7"/>
    </reaction>
</comment>
<comment type="subunit">
    <text evidence="1">Heterotrimer of A, B and C subunits.</text>
</comment>
<comment type="similarity">
    <text evidence="1">Belongs to the amidase family. GatA subfamily.</text>
</comment>
<keyword id="KW-0067">ATP-binding</keyword>
<keyword id="KW-0436">Ligase</keyword>
<keyword id="KW-0547">Nucleotide-binding</keyword>
<keyword id="KW-0648">Protein biosynthesis</keyword>
<keyword id="KW-1185">Reference proteome</keyword>
<accession>Q73Q68</accession>
<dbReference type="EC" id="6.3.5.7" evidence="1"/>
<dbReference type="EMBL" id="AE017226">
    <property type="protein sequence ID" value="AAS11071.1"/>
    <property type="molecule type" value="Genomic_DNA"/>
</dbReference>
<dbReference type="RefSeq" id="NP_971190.1">
    <property type="nucleotide sequence ID" value="NC_002967.9"/>
</dbReference>
<dbReference type="RefSeq" id="WP_010956776.1">
    <property type="nucleotide sequence ID" value="NC_002967.9"/>
</dbReference>
<dbReference type="SMR" id="Q73Q68"/>
<dbReference type="STRING" id="243275.TDE_0576"/>
<dbReference type="PaxDb" id="243275-TDE_0576"/>
<dbReference type="GeneID" id="2741012"/>
<dbReference type="KEGG" id="tde:TDE_0576"/>
<dbReference type="PATRIC" id="fig|243275.7.peg.559"/>
<dbReference type="eggNOG" id="COG0154">
    <property type="taxonomic scope" value="Bacteria"/>
</dbReference>
<dbReference type="HOGENOM" id="CLU_009600_0_3_12"/>
<dbReference type="OrthoDB" id="9811471at2"/>
<dbReference type="Proteomes" id="UP000008212">
    <property type="component" value="Chromosome"/>
</dbReference>
<dbReference type="GO" id="GO:0030956">
    <property type="term" value="C:glutamyl-tRNA(Gln) amidotransferase complex"/>
    <property type="evidence" value="ECO:0007669"/>
    <property type="project" value="InterPro"/>
</dbReference>
<dbReference type="GO" id="GO:0005524">
    <property type="term" value="F:ATP binding"/>
    <property type="evidence" value="ECO:0007669"/>
    <property type="project" value="UniProtKB-KW"/>
</dbReference>
<dbReference type="GO" id="GO:0050567">
    <property type="term" value="F:glutaminyl-tRNA synthase (glutamine-hydrolyzing) activity"/>
    <property type="evidence" value="ECO:0007669"/>
    <property type="project" value="UniProtKB-UniRule"/>
</dbReference>
<dbReference type="GO" id="GO:0006412">
    <property type="term" value="P:translation"/>
    <property type="evidence" value="ECO:0007669"/>
    <property type="project" value="UniProtKB-UniRule"/>
</dbReference>
<dbReference type="Gene3D" id="3.90.1300.10">
    <property type="entry name" value="Amidase signature (AS) domain"/>
    <property type="match status" value="1"/>
</dbReference>
<dbReference type="HAMAP" id="MF_00120">
    <property type="entry name" value="GatA"/>
    <property type="match status" value="1"/>
</dbReference>
<dbReference type="InterPro" id="IPR000120">
    <property type="entry name" value="Amidase"/>
</dbReference>
<dbReference type="InterPro" id="IPR020556">
    <property type="entry name" value="Amidase_CS"/>
</dbReference>
<dbReference type="InterPro" id="IPR023631">
    <property type="entry name" value="Amidase_dom"/>
</dbReference>
<dbReference type="InterPro" id="IPR036928">
    <property type="entry name" value="AS_sf"/>
</dbReference>
<dbReference type="InterPro" id="IPR004412">
    <property type="entry name" value="GatA"/>
</dbReference>
<dbReference type="NCBIfam" id="TIGR00132">
    <property type="entry name" value="gatA"/>
    <property type="match status" value="1"/>
</dbReference>
<dbReference type="PANTHER" id="PTHR11895:SF151">
    <property type="entry name" value="GLUTAMYL-TRNA(GLN) AMIDOTRANSFERASE SUBUNIT A"/>
    <property type="match status" value="1"/>
</dbReference>
<dbReference type="PANTHER" id="PTHR11895">
    <property type="entry name" value="TRANSAMIDASE"/>
    <property type="match status" value="1"/>
</dbReference>
<dbReference type="Pfam" id="PF01425">
    <property type="entry name" value="Amidase"/>
    <property type="match status" value="1"/>
</dbReference>
<dbReference type="SUPFAM" id="SSF75304">
    <property type="entry name" value="Amidase signature (AS) enzymes"/>
    <property type="match status" value="1"/>
</dbReference>
<dbReference type="PROSITE" id="PS00571">
    <property type="entry name" value="AMIDASES"/>
    <property type="match status" value="1"/>
</dbReference>
<name>GATA_TREDE</name>
<organism>
    <name type="scientific">Treponema denticola (strain ATCC 35405 / DSM 14222 / CIP 103919 / JCM 8153 / KCTC 15104)</name>
    <dbReference type="NCBI Taxonomy" id="243275"/>
    <lineage>
        <taxon>Bacteria</taxon>
        <taxon>Pseudomonadati</taxon>
        <taxon>Spirochaetota</taxon>
        <taxon>Spirochaetia</taxon>
        <taxon>Spirochaetales</taxon>
        <taxon>Treponemataceae</taxon>
        <taxon>Treponema</taxon>
    </lineage>
</organism>
<feature type="chain" id="PRO_0000241175" description="Glutamyl-tRNA(Gln) amidotransferase subunit A">
    <location>
        <begin position="1"/>
        <end position="485"/>
    </location>
</feature>
<feature type="active site" description="Charge relay system" evidence="1">
    <location>
        <position position="82"/>
    </location>
</feature>
<feature type="active site" description="Charge relay system" evidence="1">
    <location>
        <position position="157"/>
    </location>
</feature>
<feature type="active site" description="Acyl-ester intermediate" evidence="1">
    <location>
        <position position="181"/>
    </location>
</feature>
<evidence type="ECO:0000255" key="1">
    <source>
        <dbReference type="HAMAP-Rule" id="MF_00120"/>
    </source>
</evidence>